<organism>
    <name type="scientific">Pseudomonas aeruginosa (strain LESB58)</name>
    <dbReference type="NCBI Taxonomy" id="557722"/>
    <lineage>
        <taxon>Bacteria</taxon>
        <taxon>Pseudomonadati</taxon>
        <taxon>Pseudomonadota</taxon>
        <taxon>Gammaproteobacteria</taxon>
        <taxon>Pseudomonadales</taxon>
        <taxon>Pseudomonadaceae</taxon>
        <taxon>Pseudomonas</taxon>
    </lineage>
</organism>
<feature type="chain" id="PRO_1000117210" description="Protein-L-isoaspartate O-methyltransferase">
    <location>
        <begin position="1"/>
        <end position="211"/>
    </location>
</feature>
<feature type="active site" evidence="1">
    <location>
        <position position="60"/>
    </location>
</feature>
<comment type="function">
    <text evidence="1">Catalyzes the methyl esterification of L-isoaspartyl residues in peptides and proteins that result from spontaneous decomposition of normal L-aspartyl and L-asparaginyl residues. It plays a role in the repair and/or degradation of damaged proteins.</text>
</comment>
<comment type="catalytic activity">
    <reaction evidence="1">
        <text>[protein]-L-isoaspartate + S-adenosyl-L-methionine = [protein]-L-isoaspartate alpha-methyl ester + S-adenosyl-L-homocysteine</text>
        <dbReference type="Rhea" id="RHEA:12705"/>
        <dbReference type="Rhea" id="RHEA-COMP:12143"/>
        <dbReference type="Rhea" id="RHEA-COMP:12144"/>
        <dbReference type="ChEBI" id="CHEBI:57856"/>
        <dbReference type="ChEBI" id="CHEBI:59789"/>
        <dbReference type="ChEBI" id="CHEBI:90596"/>
        <dbReference type="ChEBI" id="CHEBI:90598"/>
        <dbReference type="EC" id="2.1.1.77"/>
    </reaction>
</comment>
<comment type="subcellular location">
    <subcellularLocation>
        <location evidence="1">Cytoplasm</location>
    </subcellularLocation>
</comment>
<comment type="similarity">
    <text evidence="1">Belongs to the methyltransferase superfamily. L-isoaspartyl/D-aspartyl protein methyltransferase family.</text>
</comment>
<name>PIMT_PSEA8</name>
<protein>
    <recommendedName>
        <fullName evidence="1">Protein-L-isoaspartate O-methyltransferase</fullName>
        <ecNumber evidence="1">2.1.1.77</ecNumber>
    </recommendedName>
    <alternativeName>
        <fullName evidence="1">L-isoaspartyl protein carboxyl methyltransferase</fullName>
    </alternativeName>
    <alternativeName>
        <fullName evidence="1">Protein L-isoaspartyl methyltransferase</fullName>
    </alternativeName>
    <alternativeName>
        <fullName evidence="1">Protein-beta-aspartate methyltransferase</fullName>
        <shortName evidence="1">PIMT</shortName>
    </alternativeName>
</protein>
<accession>B7V8C3</accession>
<sequence>MTSQRTRERLIQRLYEEGLSNAHVLEVIRRTPRHLFVDEALSHRAYEDTALPIGHNQTISQPFMVARMTELLLAAGPLDKVMEIGTGSGYQTAVLAQLVERVFSVERIQALQDKAKERLAELNLRNVVFRWGDGWEGWSALAPYNGIIVTAAATEVPQSLLDQLAPGGRLVIPVGGGEVQQLMLIVRTEDGFSRQVLDSVRFVPLLNGPIA</sequence>
<reference key="1">
    <citation type="journal article" date="2009" name="Genome Res.">
        <title>Newly introduced genomic prophage islands are critical determinants of in vivo competitiveness in the Liverpool epidemic strain of Pseudomonas aeruginosa.</title>
        <authorList>
            <person name="Winstanley C."/>
            <person name="Langille M.G.I."/>
            <person name="Fothergill J.L."/>
            <person name="Kukavica-Ibrulj I."/>
            <person name="Paradis-Bleau C."/>
            <person name="Sanschagrin F."/>
            <person name="Thomson N.R."/>
            <person name="Winsor G.L."/>
            <person name="Quail M.A."/>
            <person name="Lennard N."/>
            <person name="Bignell A."/>
            <person name="Clarke L."/>
            <person name="Seeger K."/>
            <person name="Saunders D."/>
            <person name="Harris D."/>
            <person name="Parkhill J."/>
            <person name="Hancock R.E.W."/>
            <person name="Brinkman F.S.L."/>
            <person name="Levesque R.C."/>
        </authorList>
    </citation>
    <scope>NUCLEOTIDE SEQUENCE [LARGE SCALE GENOMIC DNA]</scope>
    <source>
        <strain>LESB58</strain>
    </source>
</reference>
<evidence type="ECO:0000255" key="1">
    <source>
        <dbReference type="HAMAP-Rule" id="MF_00090"/>
    </source>
</evidence>
<keyword id="KW-0963">Cytoplasm</keyword>
<keyword id="KW-0489">Methyltransferase</keyword>
<keyword id="KW-0949">S-adenosyl-L-methionine</keyword>
<keyword id="KW-0808">Transferase</keyword>
<gene>
    <name evidence="1" type="primary">pcm</name>
    <name type="ordered locus">PLES_14111</name>
</gene>
<proteinExistence type="inferred from homology"/>
<dbReference type="EC" id="2.1.1.77" evidence="1"/>
<dbReference type="EMBL" id="FM209186">
    <property type="protein sequence ID" value="CAW26139.1"/>
    <property type="molecule type" value="Genomic_DNA"/>
</dbReference>
<dbReference type="RefSeq" id="WP_003098558.1">
    <property type="nucleotide sequence ID" value="NC_011770.1"/>
</dbReference>
<dbReference type="SMR" id="B7V8C3"/>
<dbReference type="KEGG" id="pag:PLES_14111"/>
<dbReference type="HOGENOM" id="CLU_055432_2_0_6"/>
<dbReference type="GO" id="GO:0005737">
    <property type="term" value="C:cytoplasm"/>
    <property type="evidence" value="ECO:0007669"/>
    <property type="project" value="UniProtKB-SubCell"/>
</dbReference>
<dbReference type="GO" id="GO:0004719">
    <property type="term" value="F:protein-L-isoaspartate (D-aspartate) O-methyltransferase activity"/>
    <property type="evidence" value="ECO:0007669"/>
    <property type="project" value="UniProtKB-UniRule"/>
</dbReference>
<dbReference type="GO" id="GO:0032259">
    <property type="term" value="P:methylation"/>
    <property type="evidence" value="ECO:0007669"/>
    <property type="project" value="UniProtKB-KW"/>
</dbReference>
<dbReference type="GO" id="GO:0036211">
    <property type="term" value="P:protein modification process"/>
    <property type="evidence" value="ECO:0007669"/>
    <property type="project" value="UniProtKB-UniRule"/>
</dbReference>
<dbReference type="GO" id="GO:0030091">
    <property type="term" value="P:protein repair"/>
    <property type="evidence" value="ECO:0007669"/>
    <property type="project" value="UniProtKB-UniRule"/>
</dbReference>
<dbReference type="CDD" id="cd02440">
    <property type="entry name" value="AdoMet_MTases"/>
    <property type="match status" value="1"/>
</dbReference>
<dbReference type="FunFam" id="3.40.50.150:FF:000010">
    <property type="entry name" value="Protein-L-isoaspartate O-methyltransferase"/>
    <property type="match status" value="1"/>
</dbReference>
<dbReference type="Gene3D" id="3.40.50.150">
    <property type="entry name" value="Vaccinia Virus protein VP39"/>
    <property type="match status" value="1"/>
</dbReference>
<dbReference type="HAMAP" id="MF_00090">
    <property type="entry name" value="PIMT"/>
    <property type="match status" value="1"/>
</dbReference>
<dbReference type="InterPro" id="IPR000682">
    <property type="entry name" value="PCMT"/>
</dbReference>
<dbReference type="InterPro" id="IPR029063">
    <property type="entry name" value="SAM-dependent_MTases_sf"/>
</dbReference>
<dbReference type="NCBIfam" id="TIGR00080">
    <property type="entry name" value="pimt"/>
    <property type="match status" value="1"/>
</dbReference>
<dbReference type="NCBIfam" id="NF001453">
    <property type="entry name" value="PRK00312.1"/>
    <property type="match status" value="1"/>
</dbReference>
<dbReference type="PANTHER" id="PTHR11579">
    <property type="entry name" value="PROTEIN-L-ISOASPARTATE O-METHYLTRANSFERASE"/>
    <property type="match status" value="1"/>
</dbReference>
<dbReference type="PANTHER" id="PTHR11579:SF0">
    <property type="entry name" value="PROTEIN-L-ISOASPARTATE(D-ASPARTATE) O-METHYLTRANSFERASE"/>
    <property type="match status" value="1"/>
</dbReference>
<dbReference type="Pfam" id="PF01135">
    <property type="entry name" value="PCMT"/>
    <property type="match status" value="1"/>
</dbReference>
<dbReference type="SUPFAM" id="SSF53335">
    <property type="entry name" value="S-adenosyl-L-methionine-dependent methyltransferases"/>
    <property type="match status" value="1"/>
</dbReference>
<dbReference type="PROSITE" id="PS01279">
    <property type="entry name" value="PCMT"/>
    <property type="match status" value="1"/>
</dbReference>